<keyword id="KW-0687">Ribonucleoprotein</keyword>
<keyword id="KW-0689">Ribosomal protein</keyword>
<keyword id="KW-0694">RNA-binding</keyword>
<keyword id="KW-0699">rRNA-binding</keyword>
<feature type="chain" id="PRO_0000241612" description="Large ribosomal subunit protein uL24">
    <location>
        <begin position="1"/>
        <end position="109"/>
    </location>
</feature>
<sequence length="109" mass="12054">MKRIKSGDEVIVIAGKSKGHIGKVLRVIDDAVVVEGGNLIKKHIKPNPQKPENKGGIIAREAPLHVSNVAHYNPVTKKADKVGFKYLESNGVSKKVRYYKSNNEIIDRI</sequence>
<evidence type="ECO:0000255" key="1">
    <source>
        <dbReference type="HAMAP-Rule" id="MF_01326"/>
    </source>
</evidence>
<evidence type="ECO:0000305" key="2"/>
<organism>
    <name type="scientific">Legionella pneumophila (strain Lens)</name>
    <dbReference type="NCBI Taxonomy" id="297245"/>
    <lineage>
        <taxon>Bacteria</taxon>
        <taxon>Pseudomonadati</taxon>
        <taxon>Pseudomonadota</taxon>
        <taxon>Gammaproteobacteria</taxon>
        <taxon>Legionellales</taxon>
        <taxon>Legionellaceae</taxon>
        <taxon>Legionella</taxon>
    </lineage>
</organism>
<dbReference type="EMBL" id="CR628337">
    <property type="protein sequence ID" value="CAH14611.1"/>
    <property type="molecule type" value="Genomic_DNA"/>
</dbReference>
<dbReference type="RefSeq" id="WP_010946089.1">
    <property type="nucleotide sequence ID" value="NC_006369.1"/>
</dbReference>
<dbReference type="SMR" id="Q5WZK1"/>
<dbReference type="GeneID" id="57034343"/>
<dbReference type="KEGG" id="lpf:lpl0380"/>
<dbReference type="LegioList" id="lpl0380"/>
<dbReference type="HOGENOM" id="CLU_093315_2_2_6"/>
<dbReference type="Proteomes" id="UP000002517">
    <property type="component" value="Chromosome"/>
</dbReference>
<dbReference type="GO" id="GO:1990904">
    <property type="term" value="C:ribonucleoprotein complex"/>
    <property type="evidence" value="ECO:0007669"/>
    <property type="project" value="UniProtKB-KW"/>
</dbReference>
<dbReference type="GO" id="GO:0005840">
    <property type="term" value="C:ribosome"/>
    <property type="evidence" value="ECO:0007669"/>
    <property type="project" value="UniProtKB-KW"/>
</dbReference>
<dbReference type="GO" id="GO:0019843">
    <property type="term" value="F:rRNA binding"/>
    <property type="evidence" value="ECO:0007669"/>
    <property type="project" value="UniProtKB-UniRule"/>
</dbReference>
<dbReference type="GO" id="GO:0003735">
    <property type="term" value="F:structural constituent of ribosome"/>
    <property type="evidence" value="ECO:0007669"/>
    <property type="project" value="InterPro"/>
</dbReference>
<dbReference type="GO" id="GO:0006412">
    <property type="term" value="P:translation"/>
    <property type="evidence" value="ECO:0007669"/>
    <property type="project" value="UniProtKB-UniRule"/>
</dbReference>
<dbReference type="CDD" id="cd06089">
    <property type="entry name" value="KOW_RPL26"/>
    <property type="match status" value="1"/>
</dbReference>
<dbReference type="Gene3D" id="2.30.30.30">
    <property type="match status" value="1"/>
</dbReference>
<dbReference type="HAMAP" id="MF_01326_B">
    <property type="entry name" value="Ribosomal_uL24_B"/>
    <property type="match status" value="1"/>
</dbReference>
<dbReference type="InterPro" id="IPR005824">
    <property type="entry name" value="KOW"/>
</dbReference>
<dbReference type="InterPro" id="IPR014722">
    <property type="entry name" value="Rib_uL2_dom2"/>
</dbReference>
<dbReference type="InterPro" id="IPR003256">
    <property type="entry name" value="Ribosomal_uL24"/>
</dbReference>
<dbReference type="InterPro" id="IPR005825">
    <property type="entry name" value="Ribosomal_uL24_CS"/>
</dbReference>
<dbReference type="InterPro" id="IPR041988">
    <property type="entry name" value="Ribosomal_uL24_KOW"/>
</dbReference>
<dbReference type="InterPro" id="IPR008991">
    <property type="entry name" value="Translation_prot_SH3-like_sf"/>
</dbReference>
<dbReference type="NCBIfam" id="TIGR01079">
    <property type="entry name" value="rplX_bact"/>
    <property type="match status" value="1"/>
</dbReference>
<dbReference type="PANTHER" id="PTHR12903">
    <property type="entry name" value="MITOCHONDRIAL RIBOSOMAL PROTEIN L24"/>
    <property type="match status" value="1"/>
</dbReference>
<dbReference type="Pfam" id="PF00467">
    <property type="entry name" value="KOW"/>
    <property type="match status" value="1"/>
</dbReference>
<dbReference type="Pfam" id="PF17136">
    <property type="entry name" value="ribosomal_L24"/>
    <property type="match status" value="1"/>
</dbReference>
<dbReference type="SMART" id="SM00739">
    <property type="entry name" value="KOW"/>
    <property type="match status" value="1"/>
</dbReference>
<dbReference type="SUPFAM" id="SSF50104">
    <property type="entry name" value="Translation proteins SH3-like domain"/>
    <property type="match status" value="1"/>
</dbReference>
<dbReference type="PROSITE" id="PS01108">
    <property type="entry name" value="RIBOSOMAL_L24"/>
    <property type="match status" value="1"/>
</dbReference>
<reference key="1">
    <citation type="journal article" date="2004" name="Nat. Genet.">
        <title>Evidence in the Legionella pneumophila genome for exploitation of host cell functions and high genome plasticity.</title>
        <authorList>
            <person name="Cazalet C."/>
            <person name="Rusniok C."/>
            <person name="Brueggemann H."/>
            <person name="Zidane N."/>
            <person name="Magnier A."/>
            <person name="Ma L."/>
            <person name="Tichit M."/>
            <person name="Jarraud S."/>
            <person name="Bouchier C."/>
            <person name="Vandenesch F."/>
            <person name="Kunst F."/>
            <person name="Etienne J."/>
            <person name="Glaser P."/>
            <person name="Buchrieser C."/>
        </authorList>
    </citation>
    <scope>NUCLEOTIDE SEQUENCE [LARGE SCALE GENOMIC DNA]</scope>
    <source>
        <strain>Lens</strain>
    </source>
</reference>
<name>RL24_LEGPL</name>
<proteinExistence type="inferred from homology"/>
<gene>
    <name evidence="1" type="primary">rplX</name>
    <name type="ordered locus">lpl0380</name>
</gene>
<accession>Q5WZK1</accession>
<protein>
    <recommendedName>
        <fullName evidence="1">Large ribosomal subunit protein uL24</fullName>
    </recommendedName>
    <alternativeName>
        <fullName evidence="2">50S ribosomal protein L24</fullName>
    </alternativeName>
</protein>
<comment type="function">
    <text evidence="1">One of two assembly initiator proteins, it binds directly to the 5'-end of the 23S rRNA, where it nucleates assembly of the 50S subunit.</text>
</comment>
<comment type="function">
    <text evidence="1">One of the proteins that surrounds the polypeptide exit tunnel on the outside of the subunit.</text>
</comment>
<comment type="subunit">
    <text evidence="1">Part of the 50S ribosomal subunit.</text>
</comment>
<comment type="similarity">
    <text evidence="1">Belongs to the universal ribosomal protein uL24 family.</text>
</comment>